<feature type="peptide" id="PRO_0000043427" description="Hypertrehalosaemic factor 1">
    <location>
        <begin position="1"/>
        <end position="8"/>
    </location>
</feature>
<feature type="modified residue" description="Pyrrolidone carboxylic acid" evidence="1">
    <location>
        <position position="1"/>
    </location>
</feature>
<feature type="modified residue" description="Tryptophan amide" evidence="1">
    <location>
        <position position="8"/>
    </location>
</feature>
<protein>
    <recommendedName>
        <fullName>Hypertrehalosaemic factor 1</fullName>
    </recommendedName>
    <alternativeName>
        <fullName>Adipokinetic hormone 1</fullName>
        <shortName>BlaOr-AKH-1</shortName>
    </alternativeName>
    <alternativeName>
        <fullName>Hypertrehalosaemic factor I</fullName>
    </alternativeName>
    <alternativeName>
        <fullName>Hypertrehalosaemic neuropeptide I</fullName>
    </alternativeName>
</protein>
<dbReference type="PIR" id="S08995">
    <property type="entry name" value="S08995"/>
</dbReference>
<dbReference type="GO" id="GO:0005576">
    <property type="term" value="C:extracellular region"/>
    <property type="evidence" value="ECO:0007669"/>
    <property type="project" value="UniProtKB-SubCell"/>
</dbReference>
<dbReference type="GO" id="GO:0005179">
    <property type="term" value="F:hormone activity"/>
    <property type="evidence" value="ECO:0007669"/>
    <property type="project" value="UniProtKB-KW"/>
</dbReference>
<dbReference type="GO" id="GO:0007218">
    <property type="term" value="P:neuropeptide signaling pathway"/>
    <property type="evidence" value="ECO:0007669"/>
    <property type="project" value="UniProtKB-KW"/>
</dbReference>
<dbReference type="InterPro" id="IPR002047">
    <property type="entry name" value="Adipokinetic_hormone_CS"/>
</dbReference>
<dbReference type="PROSITE" id="PS00256">
    <property type="entry name" value="AKH"/>
    <property type="match status" value="1"/>
</dbReference>
<reference key="1">
    <citation type="journal article" date="1990" name="Biol. Chem. Hoppe-Seyler">
        <title>Primary structures of hypertrehalosaemic neuropeptides isolated from the corpora cardiaca of the cockroaches Leucophaea maderae, Gromphadorhina portentosa, Blattella germanica and Blatta orientalis and of the stick insect Extatosoma tiaratum assigned by tandem fast atom bombardment mass spectrometry.</title>
        <authorList>
            <person name="Gaede G."/>
            <person name="Rinehart K.L. Jr."/>
        </authorList>
    </citation>
    <scope>PROTEIN SEQUENCE</scope>
    <scope>FUNCTION</scope>
    <scope>SUBCELLULAR LOCATION</scope>
    <source>
        <tissue>Corpora cardiaca</tissue>
    </source>
</reference>
<reference key="2">
    <citation type="journal article" date="2009" name="BMC Evol. Biol.">
        <title>A proteomic approach for studying insect phylogeny: CAPA peptides of ancient insect taxa (Dictyoptera, Blattoptera) as a test case.</title>
        <authorList>
            <person name="Roth S."/>
            <person name="Fromm B."/>
            <person name="Gaede G."/>
            <person name="Predel R."/>
        </authorList>
    </citation>
    <scope>PROTEIN SEQUENCE</scope>
    <scope>PYROGLUTAMATE FORMATION AT GLN-1</scope>
    <scope>AMIDATION AT TRP-8</scope>
    <source>
        <tissue>Corpora cardiaca</tissue>
    </source>
</reference>
<accession>P84261</accession>
<accession>P04548</accession>
<name>HTF1_BLAOR</name>
<comment type="function">
    <text evidence="2">Hypertrehalosaemic factors are neuropeptides that elevate the level of trehalose in the hemolymph (trehalose is the major carbohydrate in the hemolymph of insects).</text>
</comment>
<comment type="subcellular location">
    <subcellularLocation>
        <location evidence="2">Secreted</location>
    </subcellularLocation>
</comment>
<comment type="similarity">
    <text evidence="3">Belongs to the AKH/HRTH/RPCH family.</text>
</comment>
<evidence type="ECO:0000269" key="1">
    <source>
    </source>
</evidence>
<evidence type="ECO:0000269" key="2">
    <source>
    </source>
</evidence>
<evidence type="ECO:0000305" key="3"/>
<sequence>QVNFSPNW</sequence>
<proteinExistence type="evidence at protein level"/>
<organism>
    <name type="scientific">Blatta orientalis</name>
    <name type="common">Oriental cockroach</name>
    <dbReference type="NCBI Taxonomy" id="6976"/>
    <lineage>
        <taxon>Eukaryota</taxon>
        <taxon>Metazoa</taxon>
        <taxon>Ecdysozoa</taxon>
        <taxon>Arthropoda</taxon>
        <taxon>Hexapoda</taxon>
        <taxon>Insecta</taxon>
        <taxon>Pterygota</taxon>
        <taxon>Neoptera</taxon>
        <taxon>Polyneoptera</taxon>
        <taxon>Dictyoptera</taxon>
        <taxon>Blattodea</taxon>
        <taxon>Blattoidea</taxon>
        <taxon>Blattidae</taxon>
        <taxon>Blattinae</taxon>
        <taxon>Blatta</taxon>
    </lineage>
</organism>
<keyword id="KW-0027">Amidation</keyword>
<keyword id="KW-0903">Direct protein sequencing</keyword>
<keyword id="KW-0372">Hormone</keyword>
<keyword id="KW-0527">Neuropeptide</keyword>
<keyword id="KW-0873">Pyrrolidone carboxylic acid</keyword>
<keyword id="KW-0964">Secreted</keyword>